<evidence type="ECO:0000255" key="1">
    <source>
        <dbReference type="HAMAP-Rule" id="MF_00008"/>
    </source>
</evidence>
<gene>
    <name evidence="1" type="primary">thyA</name>
    <name type="ordered locus">XC_3444</name>
</gene>
<comment type="function">
    <text evidence="1">Catalyzes the reductive methylation of 2'-deoxyuridine-5'-monophosphate (dUMP) to 2'-deoxythymidine-5'-monophosphate (dTMP) while utilizing 5,10-methylenetetrahydrofolate (mTHF) as the methyl donor and reductant in the reaction, yielding dihydrofolate (DHF) as a by-product. This enzymatic reaction provides an intracellular de novo source of dTMP, an essential precursor for DNA biosynthesis.</text>
</comment>
<comment type="catalytic activity">
    <reaction evidence="1">
        <text>dUMP + (6R)-5,10-methylene-5,6,7,8-tetrahydrofolate = 7,8-dihydrofolate + dTMP</text>
        <dbReference type="Rhea" id="RHEA:12104"/>
        <dbReference type="ChEBI" id="CHEBI:15636"/>
        <dbReference type="ChEBI" id="CHEBI:57451"/>
        <dbReference type="ChEBI" id="CHEBI:63528"/>
        <dbReference type="ChEBI" id="CHEBI:246422"/>
        <dbReference type="EC" id="2.1.1.45"/>
    </reaction>
</comment>
<comment type="pathway">
    <text evidence="1">Pyrimidine metabolism; dTTP biosynthesis.</text>
</comment>
<comment type="subunit">
    <text evidence="1">Homodimer.</text>
</comment>
<comment type="subcellular location">
    <subcellularLocation>
        <location evidence="1">Cytoplasm</location>
    </subcellularLocation>
</comment>
<comment type="similarity">
    <text evidence="1">Belongs to the thymidylate synthase family. Bacterial-type ThyA subfamily.</text>
</comment>
<proteinExistence type="inferred from homology"/>
<reference key="1">
    <citation type="journal article" date="2005" name="Genome Res.">
        <title>Comparative and functional genomic analyses of the pathogenicity of phytopathogen Xanthomonas campestris pv. campestris.</title>
        <authorList>
            <person name="Qian W."/>
            <person name="Jia Y."/>
            <person name="Ren S.-X."/>
            <person name="He Y.-Q."/>
            <person name="Feng J.-X."/>
            <person name="Lu L.-F."/>
            <person name="Sun Q."/>
            <person name="Ying G."/>
            <person name="Tang D.-J."/>
            <person name="Tang H."/>
            <person name="Wu W."/>
            <person name="Hao P."/>
            <person name="Wang L."/>
            <person name="Jiang B.-L."/>
            <person name="Zeng S."/>
            <person name="Gu W.-Y."/>
            <person name="Lu G."/>
            <person name="Rong L."/>
            <person name="Tian Y."/>
            <person name="Yao Z."/>
            <person name="Fu G."/>
            <person name="Chen B."/>
            <person name="Fang R."/>
            <person name="Qiang B."/>
            <person name="Chen Z."/>
            <person name="Zhao G.-P."/>
            <person name="Tang J.-L."/>
            <person name="He C."/>
        </authorList>
    </citation>
    <scope>NUCLEOTIDE SEQUENCE [LARGE SCALE GENOMIC DNA]</scope>
    <source>
        <strain>8004</strain>
    </source>
</reference>
<accession>Q4UR35</accession>
<organism>
    <name type="scientific">Xanthomonas campestris pv. campestris (strain 8004)</name>
    <dbReference type="NCBI Taxonomy" id="314565"/>
    <lineage>
        <taxon>Bacteria</taxon>
        <taxon>Pseudomonadati</taxon>
        <taxon>Pseudomonadota</taxon>
        <taxon>Gammaproteobacteria</taxon>
        <taxon>Lysobacterales</taxon>
        <taxon>Lysobacteraceae</taxon>
        <taxon>Xanthomonas</taxon>
    </lineage>
</organism>
<dbReference type="EC" id="2.1.1.45" evidence="1"/>
<dbReference type="EMBL" id="CP000050">
    <property type="protein sequence ID" value="AAY50488.1"/>
    <property type="molecule type" value="Genomic_DNA"/>
</dbReference>
<dbReference type="RefSeq" id="WP_011036023.1">
    <property type="nucleotide sequence ID" value="NZ_CP155948.1"/>
</dbReference>
<dbReference type="SMR" id="Q4UR35"/>
<dbReference type="KEGG" id="xcb:XC_3444"/>
<dbReference type="HOGENOM" id="CLU_021669_0_0_6"/>
<dbReference type="UniPathway" id="UPA00575"/>
<dbReference type="Proteomes" id="UP000000420">
    <property type="component" value="Chromosome"/>
</dbReference>
<dbReference type="GO" id="GO:0005829">
    <property type="term" value="C:cytosol"/>
    <property type="evidence" value="ECO:0007669"/>
    <property type="project" value="TreeGrafter"/>
</dbReference>
<dbReference type="GO" id="GO:0004799">
    <property type="term" value="F:thymidylate synthase activity"/>
    <property type="evidence" value="ECO:0007669"/>
    <property type="project" value="UniProtKB-UniRule"/>
</dbReference>
<dbReference type="GO" id="GO:0006231">
    <property type="term" value="P:dTMP biosynthetic process"/>
    <property type="evidence" value="ECO:0007669"/>
    <property type="project" value="UniProtKB-UniRule"/>
</dbReference>
<dbReference type="GO" id="GO:0006235">
    <property type="term" value="P:dTTP biosynthetic process"/>
    <property type="evidence" value="ECO:0007669"/>
    <property type="project" value="UniProtKB-UniRule"/>
</dbReference>
<dbReference type="GO" id="GO:0032259">
    <property type="term" value="P:methylation"/>
    <property type="evidence" value="ECO:0007669"/>
    <property type="project" value="UniProtKB-KW"/>
</dbReference>
<dbReference type="CDD" id="cd00351">
    <property type="entry name" value="TS_Pyrimidine_HMase"/>
    <property type="match status" value="1"/>
</dbReference>
<dbReference type="FunFam" id="3.30.572.10:FF:000001">
    <property type="entry name" value="Thymidylate synthase"/>
    <property type="match status" value="1"/>
</dbReference>
<dbReference type="Gene3D" id="3.30.572.10">
    <property type="entry name" value="Thymidylate synthase/dCMP hydroxymethylase domain"/>
    <property type="match status" value="1"/>
</dbReference>
<dbReference type="HAMAP" id="MF_00008">
    <property type="entry name" value="Thymidy_synth_bact"/>
    <property type="match status" value="1"/>
</dbReference>
<dbReference type="InterPro" id="IPR045097">
    <property type="entry name" value="Thymidate_synth/dCMP_Mease"/>
</dbReference>
<dbReference type="InterPro" id="IPR023451">
    <property type="entry name" value="Thymidate_synth/dCMP_Mease_dom"/>
</dbReference>
<dbReference type="InterPro" id="IPR036926">
    <property type="entry name" value="Thymidate_synth/dCMP_Mease_sf"/>
</dbReference>
<dbReference type="InterPro" id="IPR000398">
    <property type="entry name" value="Thymidylate_synthase"/>
</dbReference>
<dbReference type="InterPro" id="IPR020940">
    <property type="entry name" value="Thymidylate_synthase_AS"/>
</dbReference>
<dbReference type="NCBIfam" id="NF002497">
    <property type="entry name" value="PRK01827.1-3"/>
    <property type="match status" value="1"/>
</dbReference>
<dbReference type="NCBIfam" id="NF002499">
    <property type="entry name" value="PRK01827.1-5"/>
    <property type="match status" value="1"/>
</dbReference>
<dbReference type="NCBIfam" id="TIGR03284">
    <property type="entry name" value="thym_sym"/>
    <property type="match status" value="2"/>
</dbReference>
<dbReference type="PANTHER" id="PTHR11548:SF9">
    <property type="entry name" value="THYMIDYLATE SYNTHASE"/>
    <property type="match status" value="1"/>
</dbReference>
<dbReference type="PANTHER" id="PTHR11548">
    <property type="entry name" value="THYMIDYLATE SYNTHASE 1"/>
    <property type="match status" value="1"/>
</dbReference>
<dbReference type="Pfam" id="PF00303">
    <property type="entry name" value="Thymidylat_synt"/>
    <property type="match status" value="1"/>
</dbReference>
<dbReference type="PRINTS" id="PR00108">
    <property type="entry name" value="THYMDSNTHASE"/>
</dbReference>
<dbReference type="SUPFAM" id="SSF55831">
    <property type="entry name" value="Thymidylate synthase/dCMP hydroxymethylase"/>
    <property type="match status" value="1"/>
</dbReference>
<dbReference type="PROSITE" id="PS00091">
    <property type="entry name" value="THYMIDYLATE_SYNTHASE"/>
    <property type="match status" value="1"/>
</dbReference>
<sequence>MKPYLELLQHVLEYGAEKSDRTGTGTRSVFGWQMRFDLNAGFPLVTTKKLHLRSIIHELLWFLQGDTNIAYLKDNQVRIWDEWADANGDLGPVYGKQWRRWTGPDGVEIDQMQWLVDEIKRNPDSRRLVISAWNVGELPQMALMPCHSLFQFYVVDGKLSCQLYQRSGDIFLGVPFNIASYALLTHMVAQATGLGVGDFVHTLGDAHLYSNHFEQAREQLTRTPRPLPTLRLNPDVTDLFAFRFEDIAIDGYDPHPAIKAPVAV</sequence>
<keyword id="KW-0963">Cytoplasm</keyword>
<keyword id="KW-0489">Methyltransferase</keyword>
<keyword id="KW-0545">Nucleotide biosynthesis</keyword>
<keyword id="KW-0808">Transferase</keyword>
<feature type="chain" id="PRO_1000000703" description="Thymidylate synthase">
    <location>
        <begin position="1"/>
        <end position="264"/>
    </location>
</feature>
<feature type="active site" description="Nucleophile" evidence="1">
    <location>
        <position position="146"/>
    </location>
</feature>
<feature type="binding site" description="in other chain" evidence="1">
    <location>
        <position position="21"/>
    </location>
    <ligand>
        <name>dUMP</name>
        <dbReference type="ChEBI" id="CHEBI:246422"/>
        <note>ligand shared between dimeric partners</note>
    </ligand>
</feature>
<feature type="binding site" evidence="1">
    <location>
        <position position="51"/>
    </location>
    <ligand>
        <name>(6R)-5,10-methylene-5,6,7,8-tetrahydrofolate</name>
        <dbReference type="ChEBI" id="CHEBI:15636"/>
    </ligand>
</feature>
<feature type="binding site" evidence="1">
    <location>
        <begin position="126"/>
        <end position="127"/>
    </location>
    <ligand>
        <name>dUMP</name>
        <dbReference type="ChEBI" id="CHEBI:246422"/>
        <note>ligand shared between dimeric partners</note>
    </ligand>
</feature>
<feature type="binding site" description="in other chain" evidence="1">
    <location>
        <begin position="166"/>
        <end position="169"/>
    </location>
    <ligand>
        <name>dUMP</name>
        <dbReference type="ChEBI" id="CHEBI:246422"/>
        <note>ligand shared between dimeric partners</note>
    </ligand>
</feature>
<feature type="binding site" evidence="1">
    <location>
        <position position="169"/>
    </location>
    <ligand>
        <name>(6R)-5,10-methylene-5,6,7,8-tetrahydrofolate</name>
        <dbReference type="ChEBI" id="CHEBI:15636"/>
    </ligand>
</feature>
<feature type="binding site" description="in other chain" evidence="1">
    <location>
        <position position="177"/>
    </location>
    <ligand>
        <name>dUMP</name>
        <dbReference type="ChEBI" id="CHEBI:246422"/>
        <note>ligand shared between dimeric partners</note>
    </ligand>
</feature>
<feature type="binding site" description="in other chain" evidence="1">
    <location>
        <begin position="207"/>
        <end position="209"/>
    </location>
    <ligand>
        <name>dUMP</name>
        <dbReference type="ChEBI" id="CHEBI:246422"/>
        <note>ligand shared between dimeric partners</note>
    </ligand>
</feature>
<feature type="binding site" evidence="1">
    <location>
        <position position="263"/>
    </location>
    <ligand>
        <name>(6R)-5,10-methylene-5,6,7,8-tetrahydrofolate</name>
        <dbReference type="ChEBI" id="CHEBI:15636"/>
    </ligand>
</feature>
<name>TYSY_XANC8</name>
<protein>
    <recommendedName>
        <fullName evidence="1">Thymidylate synthase</fullName>
        <shortName evidence="1">TS</shortName>
        <shortName evidence="1">TSase</shortName>
        <ecNumber evidence="1">2.1.1.45</ecNumber>
    </recommendedName>
</protein>